<dbReference type="EMBL" id="AY618655">
    <property type="protein sequence ID" value="AAT36741.1"/>
    <property type="molecule type" value="Genomic_DNA"/>
</dbReference>
<dbReference type="EMBL" id="AC004238">
    <property type="status" value="NOT_ANNOTATED_CDS"/>
    <property type="molecule type" value="Genomic_DNA"/>
</dbReference>
<dbReference type="EMBL" id="CP002685">
    <property type="protein sequence ID" value="AEC09040.1"/>
    <property type="molecule type" value="Genomic_DNA"/>
</dbReference>
<dbReference type="RefSeq" id="NP_001318356.1">
    <property type="nucleotide sequence ID" value="NM_001336535.1"/>
</dbReference>
<dbReference type="STRING" id="3702.Q6IWB2"/>
<dbReference type="GlyCosmos" id="Q6IWB2">
    <property type="glycosylation" value="1 site, No reported glycans"/>
</dbReference>
<dbReference type="PaxDb" id="3702-AT2G34925.1"/>
<dbReference type="EnsemblPlants" id="AT2G34925.1">
    <property type="protein sequence ID" value="AT2G34925.1"/>
    <property type="gene ID" value="AT2G34925"/>
</dbReference>
<dbReference type="GeneID" id="28718327"/>
<dbReference type="Gramene" id="AT2G34925.1">
    <property type="protein sequence ID" value="AT2G34925.1"/>
    <property type="gene ID" value="AT2G34925"/>
</dbReference>
<dbReference type="KEGG" id="ath:AT2G34925"/>
<dbReference type="Araport" id="AT2G34925"/>
<dbReference type="TAIR" id="AT2G34925">
    <property type="gene designation" value="CLE42"/>
</dbReference>
<dbReference type="HOGENOM" id="CLU_190199_0_0_1"/>
<dbReference type="InParanoid" id="Q6IWB2"/>
<dbReference type="OMA" id="IGANEHG"/>
<dbReference type="OrthoDB" id="1656699at2759"/>
<dbReference type="PhylomeDB" id="Q6IWB2"/>
<dbReference type="PRO" id="PR:Q6IWB2"/>
<dbReference type="Proteomes" id="UP000006548">
    <property type="component" value="Chromosome 2"/>
</dbReference>
<dbReference type="ExpressionAtlas" id="Q6IWB2">
    <property type="expression patterns" value="baseline and differential"/>
</dbReference>
<dbReference type="GO" id="GO:0048046">
    <property type="term" value="C:apoplast"/>
    <property type="evidence" value="ECO:0000250"/>
    <property type="project" value="UniProtKB"/>
</dbReference>
<dbReference type="GO" id="GO:0033612">
    <property type="term" value="F:receptor serine/threonine kinase binding"/>
    <property type="evidence" value="ECO:0000353"/>
    <property type="project" value="UniProtKB"/>
</dbReference>
<dbReference type="GO" id="GO:0090506">
    <property type="term" value="P:axillary shoot meristem initiation"/>
    <property type="evidence" value="ECO:0000314"/>
    <property type="project" value="TAIR"/>
</dbReference>
<dbReference type="GO" id="GO:0051301">
    <property type="term" value="P:cell division"/>
    <property type="evidence" value="ECO:0000315"/>
    <property type="project" value="TAIR"/>
</dbReference>
<dbReference type="GO" id="GO:0045168">
    <property type="term" value="P:cell-cell signaling involved in cell fate commitment"/>
    <property type="evidence" value="ECO:0000250"/>
    <property type="project" value="UniProtKB"/>
</dbReference>
<dbReference type="GO" id="GO:0010087">
    <property type="term" value="P:phloem or xylem histogenesis"/>
    <property type="evidence" value="ECO:0000315"/>
    <property type="project" value="TAIR"/>
</dbReference>
<dbReference type="GO" id="GO:0010223">
    <property type="term" value="P:secondary shoot formation"/>
    <property type="evidence" value="ECO:0000315"/>
    <property type="project" value="TAIR"/>
</dbReference>
<dbReference type="GO" id="GO:0010089">
    <property type="term" value="P:xylem development"/>
    <property type="evidence" value="ECO:0007669"/>
    <property type="project" value="InterPro"/>
</dbReference>
<dbReference type="InterPro" id="IPR037495">
    <property type="entry name" value="CLE41/42/44"/>
</dbReference>
<dbReference type="PANTHER" id="PTHR35301">
    <property type="entry name" value="CLAVATA3/ESR (CLE)-RELATED PROTEIN 41-RELATED"/>
    <property type="match status" value="1"/>
</dbReference>
<dbReference type="PANTHER" id="PTHR35301:SF6">
    <property type="entry name" value="CLAVATA3_ESR (CLE)-RELATED PROTEIN 42"/>
    <property type="match status" value="1"/>
</dbReference>
<organism>
    <name type="scientific">Arabidopsis thaliana</name>
    <name type="common">Mouse-ear cress</name>
    <dbReference type="NCBI Taxonomy" id="3702"/>
    <lineage>
        <taxon>Eukaryota</taxon>
        <taxon>Viridiplantae</taxon>
        <taxon>Streptophyta</taxon>
        <taxon>Embryophyta</taxon>
        <taxon>Tracheophyta</taxon>
        <taxon>Spermatophyta</taxon>
        <taxon>Magnoliopsida</taxon>
        <taxon>eudicotyledons</taxon>
        <taxon>Gunneridae</taxon>
        <taxon>Pentapetalae</taxon>
        <taxon>rosids</taxon>
        <taxon>malvids</taxon>
        <taxon>Brassicales</taxon>
        <taxon>Brassicaceae</taxon>
        <taxon>Camelineae</taxon>
        <taxon>Arabidopsis</taxon>
    </lineage>
</organism>
<protein>
    <recommendedName>
        <fullName evidence="7">CLAVATA3/ESR (CLE)-related protein 42</fullName>
    </recommendedName>
    <component>
        <recommendedName>
            <fullName evidence="7">CLE42p</fullName>
        </recommendedName>
    </component>
</protein>
<proteinExistence type="evidence at transcript level"/>
<name>CLE42_ARATH</name>
<keyword id="KW-0217">Developmental protein</keyword>
<keyword id="KW-0221">Differentiation</keyword>
<keyword id="KW-0325">Glycoprotein</keyword>
<keyword id="KW-0379">Hydroxylation</keyword>
<keyword id="KW-1185">Reference proteome</keyword>
<keyword id="KW-0964">Secreted</keyword>
<keyword id="KW-0732">Signal</keyword>
<sequence>MRSPHITISLVFLFFLFLIIQTHQRTIDQTHQIGSNVQHVSDMAVTSPEGKRRERFRVRRPMTTWLKGKMIGANEHGVPSGPNPISNR</sequence>
<reference key="1">
    <citation type="journal article" date="2006" name="Plant Physiol.">
        <title>Gain-of-function phenotypes of many CLAVATA3/ESR genes, including four new family members, correlate with tandem variations in the conserved CLAVATA3/ESR domain.</title>
        <authorList>
            <person name="Strabala T.J."/>
            <person name="O'donnell P.J."/>
            <person name="Smit A.-M."/>
            <person name="Ampomah-Dwamena C."/>
            <person name="Martin E.J."/>
            <person name="Netzler N."/>
            <person name="Nieuwenhuizen N.J."/>
            <person name="Quinn B.D."/>
            <person name="Foote H.C.C."/>
            <person name="Hudson K.R."/>
        </authorList>
    </citation>
    <scope>NUCLEOTIDE SEQUENCE [GENOMIC DNA]</scope>
    <scope>FUNCTION</scope>
    <scope>TISSUE SPECIFICITY</scope>
    <scope>GENE FAMILY</scope>
    <source>
        <strain>cv. Columbia</strain>
    </source>
</reference>
<reference key="2">
    <citation type="journal article" date="1999" name="Nature">
        <title>Sequence and analysis of chromosome 2 of the plant Arabidopsis thaliana.</title>
        <authorList>
            <person name="Lin X."/>
            <person name="Kaul S."/>
            <person name="Rounsley S.D."/>
            <person name="Shea T.P."/>
            <person name="Benito M.-I."/>
            <person name="Town C.D."/>
            <person name="Fujii C.Y."/>
            <person name="Mason T.M."/>
            <person name="Bowman C.L."/>
            <person name="Barnstead M.E."/>
            <person name="Feldblyum T.V."/>
            <person name="Buell C.R."/>
            <person name="Ketchum K.A."/>
            <person name="Lee J.J."/>
            <person name="Ronning C.M."/>
            <person name="Koo H.L."/>
            <person name="Moffat K.S."/>
            <person name="Cronin L.A."/>
            <person name="Shen M."/>
            <person name="Pai G."/>
            <person name="Van Aken S."/>
            <person name="Umayam L."/>
            <person name="Tallon L.J."/>
            <person name="Gill J.E."/>
            <person name="Adams M.D."/>
            <person name="Carrera A.J."/>
            <person name="Creasy T.H."/>
            <person name="Goodman H.M."/>
            <person name="Somerville C.R."/>
            <person name="Copenhaver G.P."/>
            <person name="Preuss D."/>
            <person name="Nierman W.C."/>
            <person name="White O."/>
            <person name="Eisen J.A."/>
            <person name="Salzberg S.L."/>
            <person name="Fraser C.M."/>
            <person name="Venter J.C."/>
        </authorList>
    </citation>
    <scope>NUCLEOTIDE SEQUENCE [LARGE SCALE GENOMIC DNA]</scope>
    <source>
        <strain>cv. Columbia</strain>
    </source>
</reference>
<reference key="3">
    <citation type="journal article" date="2017" name="Plant J.">
        <title>Araport11: a complete reannotation of the Arabidopsis thaliana reference genome.</title>
        <authorList>
            <person name="Cheng C.Y."/>
            <person name="Krishnakumar V."/>
            <person name="Chan A.P."/>
            <person name="Thibaud-Nissen F."/>
            <person name="Schobel S."/>
            <person name="Town C.D."/>
        </authorList>
    </citation>
    <scope>GENOME REANNOTATION</scope>
    <source>
        <strain>cv. Columbia</strain>
    </source>
</reference>
<reference key="4">
    <citation type="journal article" date="2006" name="Science">
        <title>Dodeca-CLE peptides as suppressors of plant stem cell differentiation.</title>
        <authorList>
            <person name="Ito Y."/>
            <person name="Nakanomyo I."/>
            <person name="Motose H."/>
            <person name="Iwamoto K."/>
            <person name="Sawa S."/>
            <person name="Dohmae N."/>
            <person name="Fukuda H."/>
        </authorList>
    </citation>
    <scope>FUNCTION</scope>
</reference>
<reference key="5">
    <citation type="journal article" date="2008" name="Cell. Mol. Life Sci.">
        <title>The CLE family of plant polypeptide signaling molecules.</title>
        <authorList>
            <person name="Jun J.H."/>
            <person name="Fiume E."/>
            <person name="Fletcher J.C."/>
        </authorList>
    </citation>
    <scope>REVIEW</scope>
</reference>
<reference key="6">
    <citation type="journal article" date="2008" name="Curr. Opin. Plant Biol.">
        <title>Diverse and conserved roles of CLE peptides.</title>
        <authorList>
            <person name="Mitchum M.G."/>
            <person name="Wang X."/>
            <person name="Davis E.L."/>
        </authorList>
    </citation>
    <scope>REVIEW</scope>
</reference>
<reference key="7">
    <citation type="journal article" date="2008" name="Proc. Natl. Acad. Sci. U.S.A.">
        <title>Plant CLE peptides from two distinct functional classes synergistically induce division of vascular cells.</title>
        <authorList>
            <person name="Whitford R."/>
            <person name="Fernandez A."/>
            <person name="De Groodt R."/>
            <person name="Ortega E."/>
            <person name="Hilson P."/>
        </authorList>
    </citation>
    <scope>FUNCTION</scope>
</reference>
<reference key="8">
    <citation type="journal article" date="2010" name="Protoplasma">
        <title>CLE peptide signaling during plant development.</title>
        <authorList>
            <person name="Wang G."/>
            <person name="Fiers M."/>
        </authorList>
    </citation>
    <scope>REVIEW</scope>
</reference>
<accession>Q6IWB2</accession>
<comment type="function">
    <molecule>CLE42p</molecule>
    <text evidence="4 5 6">Extracellular signal peptide that regulates cell fate. Represses tracheary element differentiation but promotes the formation of procambial cells.</text>
</comment>
<comment type="subcellular location">
    <molecule>CLE42p</molecule>
    <subcellularLocation>
        <location evidence="1">Secreted</location>
        <location evidence="1">Extracellular space</location>
    </subcellularLocation>
</comment>
<comment type="tissue specificity">
    <molecule>CLE42p</molecule>
    <text evidence="4">Expressed at low levels in seedlings, roots and inflorescence.</text>
</comment>
<comment type="PTM">
    <molecule>CLE42p</molecule>
    <text evidence="1">The O-glycosylation (arabinosylation) of the hydroxyproline Pro-82 enhances binding affinity of the CLE42p peptide for its receptor.</text>
</comment>
<comment type="similarity">
    <text evidence="8">Belongs to the CLV3/ESR signal peptide family.</text>
</comment>
<evidence type="ECO:0000250" key="1">
    <source>
        <dbReference type="UniProtKB" id="O49519"/>
    </source>
</evidence>
<evidence type="ECO:0000255" key="2"/>
<evidence type="ECO:0000256" key="3">
    <source>
        <dbReference type="SAM" id="MobiDB-lite"/>
    </source>
</evidence>
<evidence type="ECO:0000269" key="4">
    <source>
    </source>
</evidence>
<evidence type="ECO:0000269" key="5">
    <source>
    </source>
</evidence>
<evidence type="ECO:0000269" key="6">
    <source>
    </source>
</evidence>
<evidence type="ECO:0000303" key="7">
    <source>
    </source>
</evidence>
<evidence type="ECO:0000305" key="8"/>
<evidence type="ECO:0000312" key="9">
    <source>
        <dbReference type="Araport" id="AT2G34925"/>
    </source>
</evidence>
<evidence type="ECO:0000312" key="10">
    <source>
        <dbReference type="EMBL" id="AC004238"/>
    </source>
</evidence>
<feature type="signal peptide" evidence="2">
    <location>
        <begin position="1"/>
        <end position="24"/>
    </location>
</feature>
<feature type="chain" id="PRO_5000093474" description="CLAVATA3/ESR (CLE)-related protein 42" evidence="2">
    <location>
        <begin position="25"/>
        <end position="88"/>
    </location>
</feature>
<feature type="peptide" id="PRO_0000401285" description="CLE42p" evidence="1">
    <location>
        <begin position="76"/>
        <end position="87"/>
    </location>
</feature>
<feature type="region of interest" description="Disordered" evidence="3">
    <location>
        <begin position="69"/>
        <end position="88"/>
    </location>
</feature>
<feature type="modified residue" description="Hydroxyproline" evidence="1">
    <location>
        <position position="79"/>
    </location>
</feature>
<feature type="modified residue" description="Hydroxyproline" evidence="1">
    <location>
        <position position="82"/>
    </location>
</feature>
<feature type="glycosylation site" description="O-linked (Ara...) hydroxyproline" evidence="1">
    <location>
        <position position="82"/>
    </location>
</feature>
<gene>
    <name evidence="7" type="primary">CLE42</name>
    <name evidence="9" type="ordered locus">At2g34925</name>
    <name evidence="10" type="ORF">F19I3</name>
</gene>